<proteinExistence type="evidence at protein level"/>
<protein>
    <recommendedName>
        <fullName evidence="7">NADH:fumarate oxidoreductase</fullName>
        <ecNumber evidence="5">1.3.1.6</ecNumber>
    </recommendedName>
    <alternativeName>
        <fullName evidence="6 7">Fumarate reductase</fullName>
        <shortName evidence="7">FRD</shortName>
    </alternativeName>
</protein>
<gene>
    <name evidence="10" type="ordered locus">KPK_2907</name>
</gene>
<organism>
    <name type="scientific">Klebsiella pneumoniae (strain 342)</name>
    <dbReference type="NCBI Taxonomy" id="507522"/>
    <lineage>
        <taxon>Bacteria</taxon>
        <taxon>Pseudomonadati</taxon>
        <taxon>Pseudomonadota</taxon>
        <taxon>Gammaproteobacteria</taxon>
        <taxon>Enterobacterales</taxon>
        <taxon>Enterobacteriaceae</taxon>
        <taxon>Klebsiella/Raoultella group</taxon>
        <taxon>Klebsiella</taxon>
        <taxon>Klebsiella pneumoniae complex</taxon>
    </lineage>
</organism>
<name>FRD_KLEP3</name>
<feature type="chain" id="PRO_0000452180" description="NADH:fumarate oxidoreductase">
    <location>
        <begin position="1"/>
        <end position="925"/>
    </location>
</feature>
<feature type="active site" description="Proton donor" evidence="1">
    <location>
        <position position="756"/>
    </location>
</feature>
<feature type="binding site" evidence="2">
    <location>
        <position position="492"/>
    </location>
    <ligand>
        <name>FAD</name>
        <dbReference type="ChEBI" id="CHEBI:57692"/>
    </ligand>
</feature>
<feature type="binding site" evidence="2">
    <location>
        <position position="511"/>
    </location>
    <ligand>
        <name>FAD</name>
        <dbReference type="ChEBI" id="CHEBI:57692"/>
    </ligand>
</feature>
<feature type="binding site" evidence="2">
    <location>
        <position position="519"/>
    </location>
    <ligand>
        <name>FAD</name>
        <dbReference type="ChEBI" id="CHEBI:57692"/>
    </ligand>
</feature>
<feature type="binding site" evidence="2">
    <location>
        <position position="520"/>
    </location>
    <ligand>
        <name>FAD</name>
        <dbReference type="ChEBI" id="CHEBI:57692"/>
    </ligand>
</feature>
<feature type="binding site" evidence="2">
    <location>
        <position position="525"/>
    </location>
    <ligand>
        <name>FAD</name>
        <dbReference type="ChEBI" id="CHEBI:57692"/>
    </ligand>
</feature>
<feature type="binding site" evidence="2">
    <location>
        <position position="525"/>
    </location>
    <ligand>
        <name>fumarate</name>
        <dbReference type="ChEBI" id="CHEBI:29806"/>
    </ligand>
</feature>
<feature type="binding site" evidence="2">
    <location>
        <position position="525"/>
    </location>
    <ligand>
        <name>succinate</name>
        <dbReference type="ChEBI" id="CHEBI:30031"/>
    </ligand>
</feature>
<feature type="binding site" evidence="2">
    <location>
        <position position="526"/>
    </location>
    <ligand>
        <name>FAD</name>
        <dbReference type="ChEBI" id="CHEBI:57692"/>
    </ligand>
</feature>
<feature type="binding site" evidence="2">
    <location>
        <position position="633"/>
    </location>
    <ligand>
        <name>FAD</name>
        <dbReference type="ChEBI" id="CHEBI:57692"/>
    </ligand>
</feature>
<feature type="binding site" evidence="2">
    <location>
        <position position="719"/>
    </location>
    <ligand>
        <name>succinate</name>
        <dbReference type="ChEBI" id="CHEBI:30031"/>
    </ligand>
</feature>
<feature type="binding site" evidence="2">
    <location>
        <position position="731"/>
    </location>
    <ligand>
        <name>fumarate</name>
        <dbReference type="ChEBI" id="CHEBI:29806"/>
    </ligand>
</feature>
<feature type="binding site" evidence="2">
    <location>
        <position position="731"/>
    </location>
    <ligand>
        <name>succinate</name>
        <dbReference type="ChEBI" id="CHEBI:30031"/>
    </ligand>
</feature>
<feature type="binding site" evidence="2">
    <location>
        <position position="732"/>
    </location>
    <ligand>
        <name>fumarate</name>
        <dbReference type="ChEBI" id="CHEBI:29806"/>
    </ligand>
</feature>
<feature type="binding site" evidence="2">
    <location>
        <position position="732"/>
    </location>
    <ligand>
        <name>succinate</name>
        <dbReference type="ChEBI" id="CHEBI:30031"/>
    </ligand>
</feature>
<feature type="binding site" evidence="2">
    <location>
        <position position="859"/>
    </location>
    <ligand>
        <name>fumarate</name>
        <dbReference type="ChEBI" id="CHEBI:29806"/>
    </ligand>
</feature>
<feature type="binding site" evidence="2">
    <location>
        <position position="859"/>
    </location>
    <ligand>
        <name>succinate</name>
        <dbReference type="ChEBI" id="CHEBI:30031"/>
    </ligand>
</feature>
<feature type="binding site" evidence="2">
    <location>
        <position position="860"/>
    </location>
    <ligand>
        <name>FAD</name>
        <dbReference type="ChEBI" id="CHEBI:57692"/>
    </ligand>
</feature>
<feature type="binding site" evidence="2">
    <location>
        <position position="889"/>
    </location>
    <ligand>
        <name>FAD</name>
        <dbReference type="ChEBI" id="CHEBI:57692"/>
    </ligand>
</feature>
<feature type="binding site" evidence="2">
    <location>
        <position position="899"/>
    </location>
    <ligand>
        <name>fumarate</name>
        <dbReference type="ChEBI" id="CHEBI:29806"/>
    </ligand>
</feature>
<feature type="binding site" evidence="2">
    <location>
        <position position="899"/>
    </location>
    <ligand>
        <name>succinate</name>
        <dbReference type="ChEBI" id="CHEBI:30031"/>
    </ligand>
</feature>
<feature type="binding site" evidence="2">
    <location>
        <position position="902"/>
    </location>
    <ligand>
        <name>fumarate</name>
        <dbReference type="ChEBI" id="CHEBI:29806"/>
    </ligand>
</feature>
<feature type="binding site" evidence="2">
    <location>
        <position position="902"/>
    </location>
    <ligand>
        <name>succinate</name>
        <dbReference type="ChEBI" id="CHEBI:30031"/>
    </ligand>
</feature>
<feature type="binding site" evidence="2">
    <location>
        <position position="904"/>
    </location>
    <ligand>
        <name>FAD</name>
        <dbReference type="ChEBI" id="CHEBI:57692"/>
    </ligand>
</feature>
<feature type="binding site" evidence="2">
    <location>
        <position position="905"/>
    </location>
    <ligand>
        <name>FAD</name>
        <dbReference type="ChEBI" id="CHEBI:57692"/>
    </ligand>
</feature>
<feature type="modified residue" description="FMN phosphoryl threonine" evidence="3 4">
    <location>
        <position position="447"/>
    </location>
</feature>
<feature type="mutagenesis site" description="50% decrease in covalent flavinylation." evidence="4">
    <original>G</original>
    <variation>A</variation>
    <location>
        <position position="445"/>
    </location>
</feature>
<feature type="mutagenesis site" description="50% decrease in covalent flavinylation." evidence="4">
    <original>A</original>
    <variation>V</variation>
    <location>
        <position position="446"/>
    </location>
</feature>
<feature type="mutagenesis site" description="Abolishes covalent flavinylation and anaerobic NADH:fumarate oxidoreductase activity." evidence="4 5">
    <original>T</original>
    <variation>A</variation>
    <location>
        <position position="447"/>
    </location>
</feature>
<feature type="mutagenesis site" description="50% decrease in covalent flavinylation. Shows 40% of wild-type FRD activity." evidence="4">
    <original>T</original>
    <variation>S</variation>
    <location>
        <position position="447"/>
    </location>
</feature>
<reference key="1">
    <citation type="journal article" date="2008" name="PLoS Genet.">
        <title>Complete genome sequence of the N2-fixing broad host range endophyte Klebsiella pneumoniae 342 and virulence predictions verified in mice.</title>
        <authorList>
            <person name="Fouts D.E."/>
            <person name="Tyler H.L."/>
            <person name="DeBoy R.T."/>
            <person name="Daugherty S."/>
            <person name="Ren Q."/>
            <person name="Badger J.H."/>
            <person name="Durkin A.S."/>
            <person name="Huot H."/>
            <person name="Shrivastava S."/>
            <person name="Kothari S."/>
            <person name="Dodson R.J."/>
            <person name="Mohamoud Y."/>
            <person name="Khouri H."/>
            <person name="Roesch L.F.W."/>
            <person name="Krogfelt K.A."/>
            <person name="Struve C."/>
            <person name="Triplett E.W."/>
            <person name="Methe B.A."/>
        </authorList>
    </citation>
    <scope>NUCLEOTIDE SEQUENCE [LARGE SCALE GENOMIC DNA]</scope>
    <source>
        <strain>342</strain>
    </source>
</reference>
<reference key="2">
    <citation type="journal article" date="2014" name="Biochim. Biophys. Acta">
        <title>Localization-controlled specificity of FAD:threonine flavin transferases in Klebsiella pneumoniae and its implications for the mechanism of Na(+)-translocating NADH:quinone oxidoreductase.</title>
        <authorList>
            <person name="Bertsova Y.V."/>
            <person name="Kostyrko V.A."/>
            <person name="Baykov A.A."/>
            <person name="Bogachev A.V."/>
        </authorList>
    </citation>
    <scope>FUNCTION</scope>
    <scope>COFACTOR</scope>
    <scope>DISRUPTION PHENOTYPE</scope>
    <scope>FLAVINYLATION</scope>
    <scope>SUBCELLULAR LOCATION</scope>
    <source>
        <strain>204</strain>
    </source>
</reference>
<reference key="3">
    <citation type="journal article" date="2019" name="FEMS Microbiol. Lett.">
        <title>Mutational analysis of the flavinylation and binding motifs in two protein targets of the flavin transferase ApbE.</title>
        <authorList>
            <person name="Bertsova Y.V."/>
            <person name="Serebryakova M.V."/>
            <person name="Anashkin V.A."/>
            <person name="Baykov A.A."/>
            <person name="Bogachev A.V."/>
        </authorList>
    </citation>
    <scope>FLAVINYLATION AT THR-447 (FMN PROSTHETIC GROUP AT THR-447)</scope>
    <scope>MUTAGENESIS OF GLY-445; ALA-446 AND THR-447</scope>
</reference>
<reference key="4">
    <citation type="journal article" date="2020" name="FEMS Microbiol. Lett.">
        <title>A new water-soluble bacterial NADH: fumarate oxidoreductase.</title>
        <authorList>
            <person name="Bertsova Y.V."/>
            <person name="Oleynikov I.P."/>
            <person name="Bogachev A.V."/>
        </authorList>
    </citation>
    <scope>FUNCTION</scope>
    <scope>CATALYTIC ACTIVITY</scope>
    <scope>BIOPHYSICOCHEMICAL PROPERTIES</scope>
    <scope>SUBUNIT</scope>
    <scope>INDUCTION</scope>
    <scope>MUTAGENESIS OF THR-447</scope>
    <source>
        <strain>204</strain>
    </source>
</reference>
<comment type="function">
    <text evidence="3 5">Catalyzes the anaerobic reduction of fumarate to succinate (PubMed:24361839, PubMed:33107907). Uses NADH as the inherent electron donor in this process (PubMed:33107907). Is involved in anaerobic fumarate respiration in K.pneumoniae (PubMed:33107907).</text>
</comment>
<comment type="catalytic activity">
    <reaction evidence="5">
        <text>succinate + NAD(+) = fumarate + NADH + H(+)</text>
        <dbReference type="Rhea" id="RHEA:18281"/>
        <dbReference type="ChEBI" id="CHEBI:15378"/>
        <dbReference type="ChEBI" id="CHEBI:29806"/>
        <dbReference type="ChEBI" id="CHEBI:30031"/>
        <dbReference type="ChEBI" id="CHEBI:57540"/>
        <dbReference type="ChEBI" id="CHEBI:57945"/>
        <dbReference type="EC" id="1.3.1.6"/>
    </reaction>
    <physiologicalReaction direction="right-to-left" evidence="9">
        <dbReference type="Rhea" id="RHEA:18283"/>
    </physiologicalReaction>
</comment>
<comment type="cofactor">
    <cofactor evidence="3">
        <name>FAD</name>
        <dbReference type="ChEBI" id="CHEBI:57692"/>
    </cofactor>
    <text evidence="3">Binds 1 FAD per subunit.</text>
</comment>
<comment type="cofactor">
    <cofactor evidence="3">
        <name>FMN</name>
        <dbReference type="ChEBI" id="CHEBI:58210"/>
    </cofactor>
    <text evidence="3">Binds 2 FMN prosthetic groups per subunit. 1 FMN is bound covalently, while the other is non-covalent.</text>
</comment>
<comment type="biophysicochemical properties">
    <kinetics>
        <KM evidence="5">75 uM for NADH</KM>
        <text evidence="5">kcat is about 10 sec(-1).</text>
    </kinetics>
    <phDependence>
        <text evidence="5">Optimum pH is 6.0-6.5.</text>
    </phDependence>
</comment>
<comment type="subunit">
    <text evidence="9">Monomer.</text>
</comment>
<comment type="subcellular location">
    <subcellularLocation>
        <location evidence="3">Cytoplasm</location>
    </subcellularLocation>
</comment>
<comment type="induction">
    <text evidence="5">Induced under anaerobic conditions in the presence of fumarate or malate, but not tartrate. Is repressed under aerobic conditions.</text>
</comment>
<comment type="domain">
    <text evidence="9">Consists of three domains. The first domain of FRD (Oxidored_FMN, PF00724) carries a non-covalently bound FMN and is used for NADH oxidation. The second, FMN_bind domain (PF04205) contains a covalently bound FMN, that acts as an electron carrier between the two other domains of FRD. The C-terminal FAD_binding_2 domain contains a non-covalently bound FAD and forms a site for fumarate reduction.</text>
</comment>
<comment type="PTM">
    <text evidence="3 4">Is flavinylated on Thr-447 by ApbE2, encoded in a neighboring gene (PubMed:24361839). Flavinylation is essential for catalytic activity (PubMed:31834358).</text>
</comment>
<comment type="disruption phenotype">
    <text evidence="3">Cells lacking this gene lack cytoplasmic fumarate reductase activity, while retaining this activity in the membrane fraction.</text>
</comment>
<comment type="similarity">
    <text evidence="8">Belongs to the FAD-dependent oxidoreductase 2 family. FRD/SDH subfamily.</text>
</comment>
<sequence>MTSNERILQPFTLPNGTELKNRLLMAPMTTCTGYFDGTVTSELVEYYRARAGSIGTIIVECCFIDDYGLAFPGAIGIDNDEKIAGLAKIAEAIKAQGSKAILQIYHGGRMVDPQLIGGRQPVAPSAIAAPREGAAMPRALSGEEVEGMIAKFGDGVRRAILAGFDGVEIHGANTYLIQQFYSPNSNQRDDEWGGSRDNRARFPLAVLDITHKMARQYADDAFIIGYRFSPEEMEVPGIRFDDTMYLLEKLAARGVDYLHFSVGATLRPSIVDTSDPTPLIEKYCAMRSETLAQVPVMGVGGVVNVADAELGLDHGYDLIAVGRACIAYPDWAARIAAGEELELFIDSTQREALHIPEPLWRFSLVEAMIRDMSMGDAKFKPGMFVETVQDDANELVINVSLENDHIADIELAASPVQTVEFTTSFEEIRERILTANTPHVDAISGATSQSEAVKKAVAKAMLKSSKALAAEEGGNDAAPKSYDVVVVGSGGAGLAAAIQAHDEGASVLIVEKMPTIGGNTIKASAGMNAAETRFQRVKGIQDSKELFYQETLKGGHNKNNPQLLRRFVENAPQAIEWLADRGIMLNDITTTGGMSIDRTHRPRDGSAVGGYLISGLVRNITKRGIDVLLDTSVEEILMSGDEVSGVRLVNDEKEVIEVQTKSIVVATGGFSANSAMVVKYRPDLDGFVTTNHKGATGSGIALLERIGAGTVDMGEIQIHPTVEQQTSYLISESIRGGGAILVNQQGNRFFNEMETRDKVSAAIIALPEHYAYIVFDEHVRAKNKAADEYIAKGFVTSASSPRELAEKLGMDYHAFLATLECYNGAVEKQHDEQFGRTTALRAPINEGPFHAIRIAPGVHHTMGGVTINTDGEVLNVDQQPIRGAYAAGEVVGGIHGGNRIGGNAVADIIIFGTLAGHQAAKRARG</sequence>
<keyword id="KW-0963">Cytoplasm</keyword>
<keyword id="KW-0274">FAD</keyword>
<keyword id="KW-0285">Flavoprotein</keyword>
<keyword id="KW-0288">FMN</keyword>
<keyword id="KW-0560">Oxidoreductase</keyword>
<keyword id="KW-0597">Phosphoprotein</keyword>
<evidence type="ECO:0000250" key="1">
    <source>
        <dbReference type="UniProtKB" id="P0C278"/>
    </source>
</evidence>
<evidence type="ECO:0000250" key="2">
    <source>
        <dbReference type="UniProtKB" id="P83223"/>
    </source>
</evidence>
<evidence type="ECO:0000269" key="3">
    <source>
    </source>
</evidence>
<evidence type="ECO:0000269" key="4">
    <source>
    </source>
</evidence>
<evidence type="ECO:0000269" key="5">
    <source>
    </source>
</evidence>
<evidence type="ECO:0000303" key="6">
    <source>
    </source>
</evidence>
<evidence type="ECO:0000303" key="7">
    <source>
    </source>
</evidence>
<evidence type="ECO:0000305" key="8"/>
<evidence type="ECO:0000305" key="9">
    <source>
    </source>
</evidence>
<evidence type="ECO:0000312" key="10">
    <source>
        <dbReference type="EMBL" id="ACI10570.1"/>
    </source>
</evidence>
<accession>B5XRB0</accession>
<dbReference type="EC" id="1.3.1.6" evidence="5"/>
<dbReference type="EMBL" id="CP000964">
    <property type="protein sequence ID" value="ACI10570.1"/>
    <property type="molecule type" value="Genomic_DNA"/>
</dbReference>
<dbReference type="SMR" id="B5XRB0"/>
<dbReference type="KEGG" id="kpe:KPK_2907"/>
<dbReference type="HOGENOM" id="CLU_011398_1_2_6"/>
<dbReference type="BioCyc" id="KPNE507522:GI0B-2895-MONOMER"/>
<dbReference type="BioCyc" id="MetaCyc:MONOMER-124341"/>
<dbReference type="SABIO-RK" id="B5XRB0"/>
<dbReference type="Proteomes" id="UP000001734">
    <property type="component" value="Chromosome"/>
</dbReference>
<dbReference type="GO" id="GO:0005737">
    <property type="term" value="C:cytoplasm"/>
    <property type="evidence" value="ECO:0007669"/>
    <property type="project" value="UniProtKB-SubCell"/>
</dbReference>
<dbReference type="GO" id="GO:0016020">
    <property type="term" value="C:membrane"/>
    <property type="evidence" value="ECO:0007669"/>
    <property type="project" value="InterPro"/>
</dbReference>
<dbReference type="GO" id="GO:0010181">
    <property type="term" value="F:FMN binding"/>
    <property type="evidence" value="ECO:0007669"/>
    <property type="project" value="InterPro"/>
</dbReference>
<dbReference type="GO" id="GO:0016156">
    <property type="term" value="F:fumarate reductase (NADH) activity"/>
    <property type="evidence" value="ECO:0007669"/>
    <property type="project" value="UniProtKB-EC"/>
</dbReference>
<dbReference type="CDD" id="cd04735">
    <property type="entry name" value="OYE_like_4_FMN"/>
    <property type="match status" value="1"/>
</dbReference>
<dbReference type="FunFam" id="3.90.700.10:FF:000007">
    <property type="entry name" value="NADH-dependent fumarate reductase"/>
    <property type="match status" value="1"/>
</dbReference>
<dbReference type="Gene3D" id="3.90.1010.20">
    <property type="match status" value="1"/>
</dbReference>
<dbReference type="Gene3D" id="3.20.20.70">
    <property type="entry name" value="Aldolase class I"/>
    <property type="match status" value="1"/>
</dbReference>
<dbReference type="Gene3D" id="3.50.50.60">
    <property type="entry name" value="FAD/NAD(P)-binding domain"/>
    <property type="match status" value="1"/>
</dbReference>
<dbReference type="Gene3D" id="3.90.700.10">
    <property type="entry name" value="Succinate dehydrogenase/fumarate reductase flavoprotein, catalytic domain"/>
    <property type="match status" value="1"/>
</dbReference>
<dbReference type="InterPro" id="IPR013785">
    <property type="entry name" value="Aldolase_TIM"/>
</dbReference>
<dbReference type="InterPro" id="IPR003953">
    <property type="entry name" value="FAD-dep_OxRdtase_2_FAD-bd"/>
</dbReference>
<dbReference type="InterPro" id="IPR050315">
    <property type="entry name" value="FAD-oxidoreductase_2"/>
</dbReference>
<dbReference type="InterPro" id="IPR036188">
    <property type="entry name" value="FAD/NAD-bd_sf"/>
</dbReference>
<dbReference type="InterPro" id="IPR010960">
    <property type="entry name" value="Flavocytochrome_c"/>
</dbReference>
<dbReference type="InterPro" id="IPR007329">
    <property type="entry name" value="FMN-bd"/>
</dbReference>
<dbReference type="InterPro" id="IPR001155">
    <property type="entry name" value="OxRdtase_FMN_N"/>
</dbReference>
<dbReference type="InterPro" id="IPR027477">
    <property type="entry name" value="Succ_DH/fumarate_Rdtase_cat_sf"/>
</dbReference>
<dbReference type="NCBIfam" id="TIGR01813">
    <property type="entry name" value="flavo_cyto_c"/>
    <property type="match status" value="1"/>
</dbReference>
<dbReference type="NCBIfam" id="NF005064">
    <property type="entry name" value="PRK06481.1"/>
    <property type="match status" value="1"/>
</dbReference>
<dbReference type="PANTHER" id="PTHR43400:SF7">
    <property type="entry name" value="FAD-DEPENDENT OXIDOREDUCTASE 2 FAD BINDING DOMAIN-CONTAINING PROTEIN"/>
    <property type="match status" value="1"/>
</dbReference>
<dbReference type="PANTHER" id="PTHR43400">
    <property type="entry name" value="FUMARATE REDUCTASE"/>
    <property type="match status" value="1"/>
</dbReference>
<dbReference type="Pfam" id="PF00890">
    <property type="entry name" value="FAD_binding_2"/>
    <property type="match status" value="1"/>
</dbReference>
<dbReference type="Pfam" id="PF04205">
    <property type="entry name" value="FMN_bind"/>
    <property type="match status" value="1"/>
</dbReference>
<dbReference type="Pfam" id="PF00724">
    <property type="entry name" value="Oxidored_FMN"/>
    <property type="match status" value="1"/>
</dbReference>
<dbReference type="SMART" id="SM00900">
    <property type="entry name" value="FMN_bind"/>
    <property type="match status" value="1"/>
</dbReference>
<dbReference type="SUPFAM" id="SSF51905">
    <property type="entry name" value="FAD/NAD(P)-binding domain"/>
    <property type="match status" value="1"/>
</dbReference>
<dbReference type="SUPFAM" id="SSF51395">
    <property type="entry name" value="FMN-linked oxidoreductases"/>
    <property type="match status" value="1"/>
</dbReference>
<dbReference type="SUPFAM" id="SSF56425">
    <property type="entry name" value="Succinate dehydrogenase/fumarate reductase flavoprotein, catalytic domain"/>
    <property type="match status" value="1"/>
</dbReference>